<name>KDPA_PSEAE</name>
<organism>
    <name type="scientific">Pseudomonas aeruginosa (strain ATCC 15692 / DSM 22644 / CIP 104116 / JCM 14847 / LMG 12228 / 1C / PRS 101 / PAO1)</name>
    <dbReference type="NCBI Taxonomy" id="208964"/>
    <lineage>
        <taxon>Bacteria</taxon>
        <taxon>Pseudomonadati</taxon>
        <taxon>Pseudomonadota</taxon>
        <taxon>Gammaproteobacteria</taxon>
        <taxon>Pseudomonadales</taxon>
        <taxon>Pseudomonadaceae</taxon>
        <taxon>Pseudomonas</taxon>
    </lineage>
</organism>
<comment type="function">
    <text evidence="1">Part of the high-affinity ATP-driven potassium transport (or Kdp) system, which catalyzes the hydrolysis of ATP coupled with the electrogenic transport of potassium into the cytoplasm. This subunit binds the periplasmic potassium ions and delivers the ions to the membrane domain of KdpB through an intramembrane tunnel.</text>
</comment>
<comment type="subunit">
    <text evidence="1">The system is composed of three essential subunits: KdpA, KdpB and KdpC.</text>
</comment>
<comment type="subcellular location">
    <subcellularLocation>
        <location evidence="1">Cell inner membrane</location>
        <topology evidence="1">Multi-pass membrane protein</topology>
    </subcellularLocation>
</comment>
<comment type="similarity">
    <text evidence="1">Belongs to the KdpA family.</text>
</comment>
<proteinExistence type="inferred from homology"/>
<protein>
    <recommendedName>
        <fullName evidence="1">Potassium-transporting ATPase potassium-binding subunit</fullName>
    </recommendedName>
    <alternativeName>
        <fullName evidence="1">ATP phosphohydrolase [potassium-transporting] A chain</fullName>
    </alternativeName>
    <alternativeName>
        <fullName evidence="1">Potassium-binding and translocating subunit A</fullName>
    </alternativeName>
    <alternativeName>
        <fullName evidence="1">Potassium-translocating ATPase A chain</fullName>
    </alternativeName>
</protein>
<gene>
    <name evidence="1" type="primary">kdpA</name>
    <name type="ordered locus">PA1633</name>
</gene>
<dbReference type="EMBL" id="AE004091">
    <property type="protein sequence ID" value="AAG05022.1"/>
    <property type="molecule type" value="Genomic_DNA"/>
</dbReference>
<dbReference type="PIR" id="H83440">
    <property type="entry name" value="H83440"/>
</dbReference>
<dbReference type="RefSeq" id="NP_250324.1">
    <property type="nucleotide sequence ID" value="NC_002516.2"/>
</dbReference>
<dbReference type="RefSeq" id="WP_003097846.1">
    <property type="nucleotide sequence ID" value="NZ_QZGE01000003.1"/>
</dbReference>
<dbReference type="SMR" id="P57683"/>
<dbReference type="FunCoup" id="P57683">
    <property type="interactions" value="269"/>
</dbReference>
<dbReference type="STRING" id="208964.PA1633"/>
<dbReference type="PaxDb" id="208964-PA1633"/>
<dbReference type="GeneID" id="883055"/>
<dbReference type="KEGG" id="pae:PA1633"/>
<dbReference type="PATRIC" id="fig|208964.12.peg.1693"/>
<dbReference type="PseudoCAP" id="PA1633"/>
<dbReference type="HOGENOM" id="CLU_018614_3_0_6"/>
<dbReference type="InParanoid" id="P57683"/>
<dbReference type="OrthoDB" id="9763796at2"/>
<dbReference type="PhylomeDB" id="P57683"/>
<dbReference type="BioCyc" id="PAER208964:G1FZ6-1663-MONOMER"/>
<dbReference type="Proteomes" id="UP000002438">
    <property type="component" value="Chromosome"/>
</dbReference>
<dbReference type="GO" id="GO:0005886">
    <property type="term" value="C:plasma membrane"/>
    <property type="evidence" value="ECO:0000318"/>
    <property type="project" value="GO_Central"/>
</dbReference>
<dbReference type="GO" id="GO:0008556">
    <property type="term" value="F:P-type potassium transmembrane transporter activity"/>
    <property type="evidence" value="ECO:0000318"/>
    <property type="project" value="GO_Central"/>
</dbReference>
<dbReference type="GO" id="GO:0030955">
    <property type="term" value="F:potassium ion binding"/>
    <property type="evidence" value="ECO:0007669"/>
    <property type="project" value="UniProtKB-UniRule"/>
</dbReference>
<dbReference type="GO" id="GO:0071805">
    <property type="term" value="P:potassium ion transmembrane transport"/>
    <property type="evidence" value="ECO:0000318"/>
    <property type="project" value="GO_Central"/>
</dbReference>
<dbReference type="HAMAP" id="MF_00275">
    <property type="entry name" value="KdpA"/>
    <property type="match status" value="1"/>
</dbReference>
<dbReference type="InterPro" id="IPR004623">
    <property type="entry name" value="KdpA"/>
</dbReference>
<dbReference type="NCBIfam" id="TIGR00680">
    <property type="entry name" value="kdpA"/>
    <property type="match status" value="1"/>
</dbReference>
<dbReference type="PANTHER" id="PTHR30607">
    <property type="entry name" value="POTASSIUM-TRANSPORTING ATPASE A CHAIN"/>
    <property type="match status" value="1"/>
</dbReference>
<dbReference type="PANTHER" id="PTHR30607:SF2">
    <property type="entry name" value="POTASSIUM-TRANSPORTING ATPASE POTASSIUM-BINDING SUBUNIT"/>
    <property type="match status" value="1"/>
</dbReference>
<dbReference type="Pfam" id="PF03814">
    <property type="entry name" value="KdpA"/>
    <property type="match status" value="1"/>
</dbReference>
<dbReference type="PIRSF" id="PIRSF001294">
    <property type="entry name" value="K_ATPaseA"/>
    <property type="match status" value="1"/>
</dbReference>
<accession>P57683</accession>
<reference key="1">
    <citation type="journal article" date="2000" name="Nature">
        <title>Complete genome sequence of Pseudomonas aeruginosa PAO1, an opportunistic pathogen.</title>
        <authorList>
            <person name="Stover C.K."/>
            <person name="Pham X.-Q.T."/>
            <person name="Erwin A.L."/>
            <person name="Mizoguchi S.D."/>
            <person name="Warrener P."/>
            <person name="Hickey M.J."/>
            <person name="Brinkman F.S.L."/>
            <person name="Hufnagle W.O."/>
            <person name="Kowalik D.J."/>
            <person name="Lagrou M."/>
            <person name="Garber R.L."/>
            <person name="Goltry L."/>
            <person name="Tolentino E."/>
            <person name="Westbrock-Wadman S."/>
            <person name="Yuan Y."/>
            <person name="Brody L.L."/>
            <person name="Coulter S.N."/>
            <person name="Folger K.R."/>
            <person name="Kas A."/>
            <person name="Larbig K."/>
            <person name="Lim R.M."/>
            <person name="Smith K.A."/>
            <person name="Spencer D.H."/>
            <person name="Wong G.K.-S."/>
            <person name="Wu Z."/>
            <person name="Paulsen I.T."/>
            <person name="Reizer J."/>
            <person name="Saier M.H. Jr."/>
            <person name="Hancock R.E.W."/>
            <person name="Lory S."/>
            <person name="Olson M.V."/>
        </authorList>
    </citation>
    <scope>NUCLEOTIDE SEQUENCE [LARGE SCALE GENOMIC DNA]</scope>
    <source>
        <strain>ATCC 15692 / DSM 22644 / CIP 104116 / JCM 14847 / LMG 12228 / 1C / PRS 101 / PAO1</strain>
    </source>
</reference>
<evidence type="ECO:0000255" key="1">
    <source>
        <dbReference type="HAMAP-Rule" id="MF_00275"/>
    </source>
</evidence>
<keyword id="KW-0997">Cell inner membrane</keyword>
<keyword id="KW-1003">Cell membrane</keyword>
<keyword id="KW-0406">Ion transport</keyword>
<keyword id="KW-0472">Membrane</keyword>
<keyword id="KW-0630">Potassium</keyword>
<keyword id="KW-0633">Potassium transport</keyword>
<keyword id="KW-1185">Reference proteome</keyword>
<keyword id="KW-0812">Transmembrane</keyword>
<keyword id="KW-1133">Transmembrane helix</keyword>
<keyword id="KW-0813">Transport</keyword>
<sequence>MNSHEILLILAFFALVLVPAPFLGRYCFKVMEGQRNLLSAPLAPLERVCYRLFGVDPASEQDWKTYTLALLAFNLAGLVLLFSILMLQGSLPLNPQHLPGLEWTLAFNTAVSFVTNTNWQAYSGEASLSYFSQMVGLTVQNFVSAAVGLCVLVALARGISRRSTRQLGNFWVDLTRGTLYVLLPLCLLLALLLVWQGVPQTFFDYVHATTLQGAEQTIPLGPAASQIAIKQLGTNGGGFFGVNSTHPFENPSAWSNLFEVASIILIPAALVFTFGHYVKDLRQSRAILGCMLLLFCLGLGLSLWAEYQPNPALAQLPIEQGAPMEGKESRFGTAASMLWAITTTAASNGSVNAMHDSLSPLGGMLPLLNMMLGEVIFGGVGAGLYGMLLFVLIAVFLAGLMVGRTPEYLGKKLEAKEVRLLVFTLLVMPVGVLVLGAIAASLPGPASAVTNPGPHGFSQLLYAYTSGSANNGSAFAGFGANTPFHNLMIGLAMLIGRFGYILPILAIAGSLAAKKASPVGPNSFPTHGPLFVSLLTVTILLVGGLTFLPTLALGPIAEQLSLGF</sequence>
<feature type="chain" id="PRO_0000166513" description="Potassium-transporting ATPase potassium-binding subunit">
    <location>
        <begin position="1"/>
        <end position="564"/>
    </location>
</feature>
<feature type="transmembrane region" description="Helical" evidence="1">
    <location>
        <begin position="4"/>
        <end position="24"/>
    </location>
</feature>
<feature type="transmembrane region" description="Helical" evidence="1">
    <location>
        <begin position="67"/>
        <end position="87"/>
    </location>
</feature>
<feature type="transmembrane region" description="Helical" evidence="1">
    <location>
        <begin position="135"/>
        <end position="155"/>
    </location>
</feature>
<feature type="transmembrane region" description="Helical" evidence="1">
    <location>
        <begin position="179"/>
        <end position="199"/>
    </location>
</feature>
<feature type="transmembrane region" description="Helical" evidence="1">
    <location>
        <begin position="258"/>
        <end position="278"/>
    </location>
</feature>
<feature type="transmembrane region" description="Helical" evidence="1">
    <location>
        <begin position="286"/>
        <end position="306"/>
    </location>
</feature>
<feature type="transmembrane region" description="Helical" evidence="1">
    <location>
        <begin position="376"/>
        <end position="396"/>
    </location>
</feature>
<feature type="transmembrane region" description="Helical" evidence="1">
    <location>
        <begin position="420"/>
        <end position="440"/>
    </location>
</feature>
<feature type="transmembrane region" description="Helical" evidence="1">
    <location>
        <begin position="487"/>
        <end position="507"/>
    </location>
</feature>
<feature type="transmembrane region" description="Helical" evidence="1">
    <location>
        <begin position="528"/>
        <end position="548"/>
    </location>
</feature>